<keyword id="KW-0378">Hydrolase</keyword>
<keyword id="KW-1185">Reference proteome</keyword>
<evidence type="ECO:0000255" key="1">
    <source>
        <dbReference type="HAMAP-Rule" id="MF_00457"/>
    </source>
</evidence>
<proteinExistence type="inferred from homology"/>
<feature type="chain" id="PRO_0000156372" description="UPF0173 metal-dependent hydrolase YtkL">
    <location>
        <begin position="1"/>
        <end position="227"/>
    </location>
</feature>
<protein>
    <recommendedName>
        <fullName evidence="1">UPF0173 metal-dependent hydrolase YtkL</fullName>
    </recommendedName>
</protein>
<sequence>MKVTYHGHSVITVETKDHHIIFDPFLTGNSLTDIKPEDVKADVILLTHGHNDHVGDTEQIAKQNNALVIAPNELAVYLGWKGLNVHPMHIGGSRQFDFGKVKLTQAFHGSAITDEENKTITYTGMPAGILLTVEDKTIFHAGDTALFSDMKLIGELNHIDLAFLPIGDNFTMGPEDAKLAAEWLRAKQVVPVHYNTFPVIEQDPEAFADSLPGGVGKVMSVGETIEL</sequence>
<comment type="similarity">
    <text evidence="1">Belongs to the UPF0173 family.</text>
</comment>
<reference key="1">
    <citation type="journal article" date="1997" name="Nature">
        <title>The complete genome sequence of the Gram-positive bacterium Bacillus subtilis.</title>
        <authorList>
            <person name="Kunst F."/>
            <person name="Ogasawara N."/>
            <person name="Moszer I."/>
            <person name="Albertini A.M."/>
            <person name="Alloni G."/>
            <person name="Azevedo V."/>
            <person name="Bertero M.G."/>
            <person name="Bessieres P."/>
            <person name="Bolotin A."/>
            <person name="Borchert S."/>
            <person name="Borriss R."/>
            <person name="Boursier L."/>
            <person name="Brans A."/>
            <person name="Braun M."/>
            <person name="Brignell S.C."/>
            <person name="Bron S."/>
            <person name="Brouillet S."/>
            <person name="Bruschi C.V."/>
            <person name="Caldwell B."/>
            <person name="Capuano V."/>
            <person name="Carter N.M."/>
            <person name="Choi S.-K."/>
            <person name="Codani J.-J."/>
            <person name="Connerton I.F."/>
            <person name="Cummings N.J."/>
            <person name="Daniel R.A."/>
            <person name="Denizot F."/>
            <person name="Devine K.M."/>
            <person name="Duesterhoeft A."/>
            <person name="Ehrlich S.D."/>
            <person name="Emmerson P.T."/>
            <person name="Entian K.-D."/>
            <person name="Errington J."/>
            <person name="Fabret C."/>
            <person name="Ferrari E."/>
            <person name="Foulger D."/>
            <person name="Fritz C."/>
            <person name="Fujita M."/>
            <person name="Fujita Y."/>
            <person name="Fuma S."/>
            <person name="Galizzi A."/>
            <person name="Galleron N."/>
            <person name="Ghim S.-Y."/>
            <person name="Glaser P."/>
            <person name="Goffeau A."/>
            <person name="Golightly E.J."/>
            <person name="Grandi G."/>
            <person name="Guiseppi G."/>
            <person name="Guy B.J."/>
            <person name="Haga K."/>
            <person name="Haiech J."/>
            <person name="Harwood C.R."/>
            <person name="Henaut A."/>
            <person name="Hilbert H."/>
            <person name="Holsappel S."/>
            <person name="Hosono S."/>
            <person name="Hullo M.-F."/>
            <person name="Itaya M."/>
            <person name="Jones L.-M."/>
            <person name="Joris B."/>
            <person name="Karamata D."/>
            <person name="Kasahara Y."/>
            <person name="Klaerr-Blanchard M."/>
            <person name="Klein C."/>
            <person name="Kobayashi Y."/>
            <person name="Koetter P."/>
            <person name="Koningstein G."/>
            <person name="Krogh S."/>
            <person name="Kumano M."/>
            <person name="Kurita K."/>
            <person name="Lapidus A."/>
            <person name="Lardinois S."/>
            <person name="Lauber J."/>
            <person name="Lazarevic V."/>
            <person name="Lee S.-M."/>
            <person name="Levine A."/>
            <person name="Liu H."/>
            <person name="Masuda S."/>
            <person name="Mauel C."/>
            <person name="Medigue C."/>
            <person name="Medina N."/>
            <person name="Mellado R.P."/>
            <person name="Mizuno M."/>
            <person name="Moestl D."/>
            <person name="Nakai S."/>
            <person name="Noback M."/>
            <person name="Noone D."/>
            <person name="O'Reilly M."/>
            <person name="Ogawa K."/>
            <person name="Ogiwara A."/>
            <person name="Oudega B."/>
            <person name="Park S.-H."/>
            <person name="Parro V."/>
            <person name="Pohl T.M."/>
            <person name="Portetelle D."/>
            <person name="Porwollik S."/>
            <person name="Prescott A.M."/>
            <person name="Presecan E."/>
            <person name="Pujic P."/>
            <person name="Purnelle B."/>
            <person name="Rapoport G."/>
            <person name="Rey M."/>
            <person name="Reynolds S."/>
            <person name="Rieger M."/>
            <person name="Rivolta C."/>
            <person name="Rocha E."/>
            <person name="Roche B."/>
            <person name="Rose M."/>
            <person name="Sadaie Y."/>
            <person name="Sato T."/>
            <person name="Scanlan E."/>
            <person name="Schleich S."/>
            <person name="Schroeter R."/>
            <person name="Scoffone F."/>
            <person name="Sekiguchi J."/>
            <person name="Sekowska A."/>
            <person name="Seror S.J."/>
            <person name="Serror P."/>
            <person name="Shin B.-S."/>
            <person name="Soldo B."/>
            <person name="Sorokin A."/>
            <person name="Tacconi E."/>
            <person name="Takagi T."/>
            <person name="Takahashi H."/>
            <person name="Takemaru K."/>
            <person name="Takeuchi M."/>
            <person name="Tamakoshi A."/>
            <person name="Tanaka T."/>
            <person name="Terpstra P."/>
            <person name="Tognoni A."/>
            <person name="Tosato V."/>
            <person name="Uchiyama S."/>
            <person name="Vandenbol M."/>
            <person name="Vannier F."/>
            <person name="Vassarotti A."/>
            <person name="Viari A."/>
            <person name="Wambutt R."/>
            <person name="Wedler E."/>
            <person name="Wedler H."/>
            <person name="Weitzenegger T."/>
            <person name="Winters P."/>
            <person name="Wipat A."/>
            <person name="Yamamoto H."/>
            <person name="Yamane K."/>
            <person name="Yasumoto K."/>
            <person name="Yata K."/>
            <person name="Yoshida K."/>
            <person name="Yoshikawa H.-F."/>
            <person name="Zumstein E."/>
            <person name="Yoshikawa H."/>
            <person name="Danchin A."/>
        </authorList>
    </citation>
    <scope>NUCLEOTIDE SEQUENCE [LARGE SCALE GENOMIC DNA]</scope>
    <source>
        <strain>168</strain>
    </source>
</reference>
<reference key="2">
    <citation type="journal article" date="1999" name="Genome Res.">
        <title>Detecting and analyzing DNA sequencing errors: toward a higher quality of the Bacillus subtilis genome sequence.</title>
        <authorList>
            <person name="Medigue C."/>
            <person name="Rose M."/>
            <person name="Viari A."/>
            <person name="Danchin A."/>
        </authorList>
    </citation>
    <scope>SEQUENCE REVISION</scope>
</reference>
<organism>
    <name type="scientific">Bacillus subtilis (strain 168)</name>
    <dbReference type="NCBI Taxonomy" id="224308"/>
    <lineage>
        <taxon>Bacteria</taxon>
        <taxon>Bacillati</taxon>
        <taxon>Bacillota</taxon>
        <taxon>Bacilli</taxon>
        <taxon>Bacillales</taxon>
        <taxon>Bacillaceae</taxon>
        <taxon>Bacillus</taxon>
    </lineage>
</organism>
<name>YTKL_BACSU</name>
<gene>
    <name type="primary">ytkL</name>
    <name type="ordered locus">BSU29410</name>
</gene>
<accession>Q795U4</accession>
<dbReference type="EMBL" id="AL009126">
    <property type="protein sequence ID" value="CAB14901.2"/>
    <property type="molecule type" value="Genomic_DNA"/>
</dbReference>
<dbReference type="RefSeq" id="NP_390819.2">
    <property type="nucleotide sequence ID" value="NC_000964.3"/>
</dbReference>
<dbReference type="RefSeq" id="WP_003245964.1">
    <property type="nucleotide sequence ID" value="NZ_OZ025638.1"/>
</dbReference>
<dbReference type="SMR" id="Q795U4"/>
<dbReference type="FunCoup" id="Q795U4">
    <property type="interactions" value="50"/>
</dbReference>
<dbReference type="STRING" id="224308.BSU29410"/>
<dbReference type="jPOST" id="Q795U4"/>
<dbReference type="PaxDb" id="224308-BSU29410"/>
<dbReference type="EnsemblBacteria" id="CAB14901">
    <property type="protein sequence ID" value="CAB14901"/>
    <property type="gene ID" value="BSU_29410"/>
</dbReference>
<dbReference type="GeneID" id="936598"/>
<dbReference type="KEGG" id="bsu:BSU29410"/>
<dbReference type="PATRIC" id="fig|224308.179.peg.3195"/>
<dbReference type="eggNOG" id="COG2220">
    <property type="taxonomic scope" value="Bacteria"/>
</dbReference>
<dbReference type="InParanoid" id="Q795U4"/>
<dbReference type="OrthoDB" id="9789133at2"/>
<dbReference type="PhylomeDB" id="Q795U4"/>
<dbReference type="BioCyc" id="BSUB:BSU29410-MONOMER"/>
<dbReference type="Proteomes" id="UP000001570">
    <property type="component" value="Chromosome"/>
</dbReference>
<dbReference type="GO" id="GO:0016787">
    <property type="term" value="F:hydrolase activity"/>
    <property type="evidence" value="ECO:0007669"/>
    <property type="project" value="UniProtKB-UniRule"/>
</dbReference>
<dbReference type="Gene3D" id="3.60.15.10">
    <property type="entry name" value="Ribonuclease Z/Hydroxyacylglutathione hydrolase-like"/>
    <property type="match status" value="1"/>
</dbReference>
<dbReference type="HAMAP" id="MF_00457">
    <property type="entry name" value="UPF0173"/>
    <property type="match status" value="1"/>
</dbReference>
<dbReference type="InterPro" id="IPR001279">
    <property type="entry name" value="Metallo-B-lactamas"/>
</dbReference>
<dbReference type="InterPro" id="IPR036866">
    <property type="entry name" value="RibonucZ/Hydroxyglut_hydro"/>
</dbReference>
<dbReference type="InterPro" id="IPR022877">
    <property type="entry name" value="UPF0173"/>
</dbReference>
<dbReference type="NCBIfam" id="NF001911">
    <property type="entry name" value="PRK00685.1"/>
    <property type="match status" value="1"/>
</dbReference>
<dbReference type="PANTHER" id="PTHR39189">
    <property type="entry name" value="UPF0173 METAL-DEPENDENT HYDROLASE YTKL"/>
    <property type="match status" value="1"/>
</dbReference>
<dbReference type="PANTHER" id="PTHR39189:SF1">
    <property type="entry name" value="UPF0173 METAL-DEPENDENT HYDROLASE YTKL"/>
    <property type="match status" value="1"/>
</dbReference>
<dbReference type="Pfam" id="PF12706">
    <property type="entry name" value="Lactamase_B_2"/>
    <property type="match status" value="1"/>
</dbReference>
<dbReference type="SMART" id="SM00849">
    <property type="entry name" value="Lactamase_B"/>
    <property type="match status" value="1"/>
</dbReference>
<dbReference type="SUPFAM" id="SSF56281">
    <property type="entry name" value="Metallo-hydrolase/oxidoreductase"/>
    <property type="match status" value="1"/>
</dbReference>